<organism>
    <name type="scientific">Clupea harengus</name>
    <name type="common">Atlantic herring</name>
    <dbReference type="NCBI Taxonomy" id="7950"/>
    <lineage>
        <taxon>Eukaryota</taxon>
        <taxon>Metazoa</taxon>
        <taxon>Chordata</taxon>
        <taxon>Craniata</taxon>
        <taxon>Vertebrata</taxon>
        <taxon>Euteleostomi</taxon>
        <taxon>Actinopterygii</taxon>
        <taxon>Neopterygii</taxon>
        <taxon>Teleostei</taxon>
        <taxon>Clupei</taxon>
        <taxon>Clupeiformes</taxon>
        <taxon>Clupeoidei</taxon>
        <taxon>Clupeidae</taxon>
        <taxon>Clupea</taxon>
    </lineage>
</organism>
<proteinExistence type="evidence at transcript level"/>
<accession>P32187</accession>
<gene>
    <name type="primary">epd</name>
</gene>
<reference key="1">
    <citation type="journal article" date="1993" name="J. Mol. Evol.">
        <title>Molecular analysis of ependymins from the cerebrospinal fluid of the orders Clupeiformes and Salmoniformes: no indication for the existence of an euteleost infradivision.</title>
        <authorList>
            <person name="Mueller-Schmid A."/>
            <person name="Ganss B."/>
            <person name="Gorr T."/>
            <person name="Hoffmann W."/>
        </authorList>
    </citation>
    <scope>NUCLEOTIDE SEQUENCE [MRNA]</scope>
    <source>
        <tissue>Brain</tissue>
    </source>
</reference>
<protein>
    <recommendedName>
        <fullName>Ependymin</fullName>
        <shortName>EPD</shortName>
    </recommendedName>
</protein>
<feature type="signal peptide" evidence="1">
    <location>
        <begin position="1"/>
        <end position="20"/>
    </location>
</feature>
<feature type="chain" id="PRO_0000008343" description="Ependymin">
    <location>
        <begin position="21"/>
        <end position="212"/>
    </location>
</feature>
<feature type="glycosylation site" description="N-linked (GlcNAc...) asparagine" evidence="2">
    <location>
        <position position="69"/>
    </location>
</feature>
<feature type="glycosylation site" description="N-linked (GlcNAc...) asparagine" evidence="2">
    <location>
        <position position="92"/>
    </location>
</feature>
<feature type="glycosylation site" description="N-linked (GlcNAc...) asparagine" evidence="2">
    <location>
        <position position="112"/>
    </location>
</feature>
<dbReference type="EMBL" id="L09065">
    <property type="protein sequence ID" value="AAA49201.1"/>
    <property type="molecule type" value="mRNA"/>
</dbReference>
<dbReference type="PIR" id="I50490">
    <property type="entry name" value="I50490"/>
</dbReference>
<dbReference type="RefSeq" id="NP_001296767.1">
    <property type="nucleotide sequence ID" value="NM_001309838.1"/>
</dbReference>
<dbReference type="SMR" id="P32187"/>
<dbReference type="GlyCosmos" id="P32187">
    <property type="glycosylation" value="3 sites, No reported glycans"/>
</dbReference>
<dbReference type="GeneID" id="105901042"/>
<dbReference type="KEGG" id="char:105901042"/>
<dbReference type="CTD" id="30199"/>
<dbReference type="OrthoDB" id="8872894at2759"/>
<dbReference type="Proteomes" id="UP000515152">
    <property type="component" value="Chromosome 8"/>
</dbReference>
<dbReference type="GO" id="GO:0005576">
    <property type="term" value="C:extracellular region"/>
    <property type="evidence" value="ECO:0007669"/>
    <property type="project" value="UniProtKB-SubCell"/>
</dbReference>
<dbReference type="GO" id="GO:0005764">
    <property type="term" value="C:lysosome"/>
    <property type="evidence" value="ECO:0007669"/>
    <property type="project" value="TreeGrafter"/>
</dbReference>
<dbReference type="GO" id="GO:0005509">
    <property type="term" value="F:calcium ion binding"/>
    <property type="evidence" value="ECO:0007669"/>
    <property type="project" value="InterPro"/>
</dbReference>
<dbReference type="GO" id="GO:0007160">
    <property type="term" value="P:cell-matrix adhesion"/>
    <property type="evidence" value="ECO:0007669"/>
    <property type="project" value="InterPro"/>
</dbReference>
<dbReference type="InterPro" id="IPR001299">
    <property type="entry name" value="Ependymin"/>
</dbReference>
<dbReference type="InterPro" id="IPR018224">
    <property type="entry name" value="Ependymin_CS"/>
</dbReference>
<dbReference type="PANTHER" id="PTHR10697:SF5">
    <property type="entry name" value="EPENDYMIN-RELATED"/>
    <property type="match status" value="1"/>
</dbReference>
<dbReference type="PANTHER" id="PTHR10697">
    <property type="entry name" value="MAMMALIAN EPENDYMIN-RELATED PROTEIN 1"/>
    <property type="match status" value="1"/>
</dbReference>
<dbReference type="Pfam" id="PF00811">
    <property type="entry name" value="Ependymin"/>
    <property type="match status" value="1"/>
</dbReference>
<dbReference type="PRINTS" id="PR00317">
    <property type="entry name" value="EPENDYMIN"/>
</dbReference>
<dbReference type="SMART" id="SM00026">
    <property type="entry name" value="EPEND"/>
    <property type="match status" value="1"/>
</dbReference>
<dbReference type="PROSITE" id="PS00898">
    <property type="entry name" value="EPENDYMIN_1"/>
    <property type="match status" value="1"/>
</dbReference>
<dbReference type="PROSITE" id="PS00899">
    <property type="entry name" value="EPENDYMIN_2"/>
    <property type="match status" value="1"/>
</dbReference>
<keyword id="KW-0106">Calcium</keyword>
<keyword id="KW-1015">Disulfide bond</keyword>
<keyword id="KW-0325">Glycoprotein</keyword>
<keyword id="KW-1185">Reference proteome</keyword>
<keyword id="KW-0964">Secreted</keyword>
<keyword id="KW-0732">Signal</keyword>
<sequence length="212" mass="23679">MRLTGLLCVALWSASAVVLAEHQPCRPPPQTHGNLWVTAAKGAPASVGEFNYDSQARKLHFKDDALHVNKTDHLEMLIFFEEGIFYDIDSHNQSCHKKTLQSTYHCLEVPPNATHVTEGYLGSEFIGDQGVRMRKWRKRVPELDGVVTVATTSCGCVTLFATLFTDSNDVLVFNFLDVEMKVKNPLEVFVPPSYCDGVALEEEGDTFFGLFH</sequence>
<name>EPD_CLUHA</name>
<evidence type="ECO:0000250" key="1"/>
<evidence type="ECO:0000255" key="2"/>
<evidence type="ECO:0000305" key="3"/>
<comment type="function">
    <text>May play a role in neural plasticity. May be involved during axon regeneration.</text>
</comment>
<comment type="subunit">
    <text evidence="1">Forms disulfide-linked dimers.</text>
</comment>
<comment type="subcellular location">
    <subcellularLocation>
        <location>Secreted</location>
    </subcellularLocation>
</comment>
<comment type="tissue specificity">
    <text>EPDs are synthesized in the meninx and secreted in the cerebrospinal fluid.</text>
</comment>
<comment type="PTM">
    <text>Binds calcium through the terminal sialic acids.</text>
</comment>
<comment type="similarity">
    <text evidence="3">Belongs to the ependymin family.</text>
</comment>